<reference key="1">
    <citation type="journal article" date="2005" name="Science">
        <title>Life at depth: Photobacterium profundum genome sequence and expression analysis.</title>
        <authorList>
            <person name="Vezzi A."/>
            <person name="Campanaro S."/>
            <person name="D'Angelo M."/>
            <person name="Simonato F."/>
            <person name="Vitulo N."/>
            <person name="Lauro F.M."/>
            <person name="Cestaro A."/>
            <person name="Malacrida G."/>
            <person name="Simionati B."/>
            <person name="Cannata N."/>
            <person name="Romualdi C."/>
            <person name="Bartlett D.H."/>
            <person name="Valle G."/>
        </authorList>
    </citation>
    <scope>NUCLEOTIDE SEQUENCE [LARGE SCALE GENOMIC DNA]</scope>
    <source>
        <strain>ATCC BAA-1253 / SS9</strain>
    </source>
</reference>
<protein>
    <recommendedName>
        <fullName evidence="1">Large ribosomal subunit protein uL5</fullName>
    </recommendedName>
    <alternativeName>
        <fullName evidence="2">50S ribosomal protein L5</fullName>
    </alternativeName>
</protein>
<dbReference type="EMBL" id="CR378663">
    <property type="protein sequence ID" value="CAG18771.1"/>
    <property type="molecule type" value="Genomic_DNA"/>
</dbReference>
<dbReference type="RefSeq" id="WP_011217137.1">
    <property type="nucleotide sequence ID" value="NC_006370.1"/>
</dbReference>
<dbReference type="SMR" id="Q6LVA4"/>
<dbReference type="STRING" id="298386.PBPRA0332"/>
<dbReference type="KEGG" id="ppr:PBPRA0332"/>
<dbReference type="eggNOG" id="COG0094">
    <property type="taxonomic scope" value="Bacteria"/>
</dbReference>
<dbReference type="HOGENOM" id="CLU_061015_2_1_6"/>
<dbReference type="Proteomes" id="UP000000593">
    <property type="component" value="Chromosome 1"/>
</dbReference>
<dbReference type="GO" id="GO:1990904">
    <property type="term" value="C:ribonucleoprotein complex"/>
    <property type="evidence" value="ECO:0007669"/>
    <property type="project" value="UniProtKB-KW"/>
</dbReference>
<dbReference type="GO" id="GO:0005840">
    <property type="term" value="C:ribosome"/>
    <property type="evidence" value="ECO:0007669"/>
    <property type="project" value="UniProtKB-KW"/>
</dbReference>
<dbReference type="GO" id="GO:0019843">
    <property type="term" value="F:rRNA binding"/>
    <property type="evidence" value="ECO:0007669"/>
    <property type="project" value="UniProtKB-UniRule"/>
</dbReference>
<dbReference type="GO" id="GO:0003735">
    <property type="term" value="F:structural constituent of ribosome"/>
    <property type="evidence" value="ECO:0007669"/>
    <property type="project" value="InterPro"/>
</dbReference>
<dbReference type="GO" id="GO:0000049">
    <property type="term" value="F:tRNA binding"/>
    <property type="evidence" value="ECO:0007669"/>
    <property type="project" value="UniProtKB-UniRule"/>
</dbReference>
<dbReference type="GO" id="GO:0006412">
    <property type="term" value="P:translation"/>
    <property type="evidence" value="ECO:0007669"/>
    <property type="project" value="UniProtKB-UniRule"/>
</dbReference>
<dbReference type="FunFam" id="3.30.1440.10:FF:000001">
    <property type="entry name" value="50S ribosomal protein L5"/>
    <property type="match status" value="1"/>
</dbReference>
<dbReference type="Gene3D" id="3.30.1440.10">
    <property type="match status" value="1"/>
</dbReference>
<dbReference type="HAMAP" id="MF_01333_B">
    <property type="entry name" value="Ribosomal_uL5_B"/>
    <property type="match status" value="1"/>
</dbReference>
<dbReference type="InterPro" id="IPR002132">
    <property type="entry name" value="Ribosomal_uL5"/>
</dbReference>
<dbReference type="InterPro" id="IPR020930">
    <property type="entry name" value="Ribosomal_uL5_bac-type"/>
</dbReference>
<dbReference type="InterPro" id="IPR031309">
    <property type="entry name" value="Ribosomal_uL5_C"/>
</dbReference>
<dbReference type="InterPro" id="IPR020929">
    <property type="entry name" value="Ribosomal_uL5_CS"/>
</dbReference>
<dbReference type="InterPro" id="IPR022803">
    <property type="entry name" value="Ribosomal_uL5_dom_sf"/>
</dbReference>
<dbReference type="InterPro" id="IPR031310">
    <property type="entry name" value="Ribosomal_uL5_N"/>
</dbReference>
<dbReference type="NCBIfam" id="NF000585">
    <property type="entry name" value="PRK00010.1"/>
    <property type="match status" value="1"/>
</dbReference>
<dbReference type="PANTHER" id="PTHR11994">
    <property type="entry name" value="60S RIBOSOMAL PROTEIN L11-RELATED"/>
    <property type="match status" value="1"/>
</dbReference>
<dbReference type="Pfam" id="PF00281">
    <property type="entry name" value="Ribosomal_L5"/>
    <property type="match status" value="1"/>
</dbReference>
<dbReference type="Pfam" id="PF00673">
    <property type="entry name" value="Ribosomal_L5_C"/>
    <property type="match status" value="1"/>
</dbReference>
<dbReference type="PIRSF" id="PIRSF002161">
    <property type="entry name" value="Ribosomal_L5"/>
    <property type="match status" value="1"/>
</dbReference>
<dbReference type="SUPFAM" id="SSF55282">
    <property type="entry name" value="RL5-like"/>
    <property type="match status" value="1"/>
</dbReference>
<dbReference type="PROSITE" id="PS00358">
    <property type="entry name" value="RIBOSOMAL_L5"/>
    <property type="match status" value="1"/>
</dbReference>
<proteinExistence type="inferred from homology"/>
<accession>Q6LVA4</accession>
<organism>
    <name type="scientific">Photobacterium profundum (strain SS9)</name>
    <dbReference type="NCBI Taxonomy" id="298386"/>
    <lineage>
        <taxon>Bacteria</taxon>
        <taxon>Pseudomonadati</taxon>
        <taxon>Pseudomonadota</taxon>
        <taxon>Gammaproteobacteria</taxon>
        <taxon>Vibrionales</taxon>
        <taxon>Vibrionaceae</taxon>
        <taxon>Photobacterium</taxon>
    </lineage>
</organism>
<sequence>MAKLHDYYKETVVKELVEKFEYKSIMQVPRIEKITLNMGVGEAINDKKLLENAAADMTAIAGQKPLITKARKSVAGFKIREGYPIGCKVTLRGERMWDFFERLISIAVPRIRDFRGLNPNSFDGRGNYSMGVREQIIFPEIDYDKVDRVRGLDITITTSAASDEESKALLSAFNFPFRK</sequence>
<name>RL5_PHOPR</name>
<comment type="function">
    <text evidence="1">This is one of the proteins that bind and probably mediate the attachment of the 5S RNA into the large ribosomal subunit, where it forms part of the central protuberance. In the 70S ribosome it contacts protein S13 of the 30S subunit (bridge B1b), connecting the 2 subunits; this bridge is implicated in subunit movement. Contacts the P site tRNA; the 5S rRNA and some of its associated proteins might help stabilize positioning of ribosome-bound tRNAs.</text>
</comment>
<comment type="subunit">
    <text evidence="1">Part of the 50S ribosomal subunit; part of the 5S rRNA/L5/L18/L25 subcomplex. Contacts the 5S rRNA and the P site tRNA. Forms a bridge to the 30S subunit in the 70S ribosome.</text>
</comment>
<comment type="similarity">
    <text evidence="1">Belongs to the universal ribosomal protein uL5 family.</text>
</comment>
<feature type="chain" id="PRO_0000124964" description="Large ribosomal subunit protein uL5">
    <location>
        <begin position="1"/>
        <end position="179"/>
    </location>
</feature>
<gene>
    <name evidence="1" type="primary">rplE</name>
    <name type="ordered locus">PBPRA0332</name>
</gene>
<evidence type="ECO:0000255" key="1">
    <source>
        <dbReference type="HAMAP-Rule" id="MF_01333"/>
    </source>
</evidence>
<evidence type="ECO:0000305" key="2"/>
<keyword id="KW-1185">Reference proteome</keyword>
<keyword id="KW-0687">Ribonucleoprotein</keyword>
<keyword id="KW-0689">Ribosomal protein</keyword>
<keyword id="KW-0694">RNA-binding</keyword>
<keyword id="KW-0699">rRNA-binding</keyword>
<keyword id="KW-0820">tRNA-binding</keyword>